<name>HRCA_CLAM3</name>
<proteinExistence type="inferred from homology"/>
<evidence type="ECO:0000255" key="1">
    <source>
        <dbReference type="HAMAP-Rule" id="MF_00081"/>
    </source>
</evidence>
<feature type="chain" id="PRO_1000010397" description="Heat-inducible transcription repressor HrcA">
    <location>
        <begin position="1"/>
        <end position="340"/>
    </location>
</feature>
<reference key="1">
    <citation type="journal article" date="2008" name="J. Bacteriol.">
        <title>The genome sequence of the tomato-pathogenic actinomycete Clavibacter michiganensis subsp. michiganensis NCPPB382 reveals a large island involved in pathogenicity.</title>
        <authorList>
            <person name="Gartemann K.-H."/>
            <person name="Abt B."/>
            <person name="Bekel T."/>
            <person name="Burger A."/>
            <person name="Engemann J."/>
            <person name="Fluegel M."/>
            <person name="Gaigalat L."/>
            <person name="Goesmann A."/>
            <person name="Graefen I."/>
            <person name="Kalinowski J."/>
            <person name="Kaup O."/>
            <person name="Kirchner O."/>
            <person name="Krause L."/>
            <person name="Linke B."/>
            <person name="McHardy A."/>
            <person name="Meyer F."/>
            <person name="Pohle S."/>
            <person name="Rueckert C."/>
            <person name="Schneiker S."/>
            <person name="Zellermann E.-M."/>
            <person name="Puehler A."/>
            <person name="Eichenlaub R."/>
            <person name="Kaiser O."/>
            <person name="Bartels D."/>
        </authorList>
    </citation>
    <scope>NUCLEOTIDE SEQUENCE [LARGE SCALE GENOMIC DNA]</scope>
    <source>
        <strain>NCPPB 382</strain>
    </source>
</reference>
<keyword id="KW-0678">Repressor</keyword>
<keyword id="KW-0346">Stress response</keyword>
<keyword id="KW-0804">Transcription</keyword>
<keyword id="KW-0805">Transcription regulation</keyword>
<dbReference type="EMBL" id="AM711867">
    <property type="protein sequence ID" value="CAN01613.1"/>
    <property type="molecule type" value="Genomic_DNA"/>
</dbReference>
<dbReference type="RefSeq" id="WP_012038251.1">
    <property type="nucleotide sequence ID" value="NC_009480.1"/>
</dbReference>
<dbReference type="SMR" id="A5CRA6"/>
<dbReference type="GeneID" id="92947543"/>
<dbReference type="KEGG" id="cmi:CMM_1564"/>
<dbReference type="eggNOG" id="COG1420">
    <property type="taxonomic scope" value="Bacteria"/>
</dbReference>
<dbReference type="HOGENOM" id="CLU_050019_2_0_11"/>
<dbReference type="OrthoDB" id="9783139at2"/>
<dbReference type="Proteomes" id="UP000001564">
    <property type="component" value="Chromosome"/>
</dbReference>
<dbReference type="GO" id="GO:0003677">
    <property type="term" value="F:DNA binding"/>
    <property type="evidence" value="ECO:0007669"/>
    <property type="project" value="InterPro"/>
</dbReference>
<dbReference type="GO" id="GO:0045892">
    <property type="term" value="P:negative regulation of DNA-templated transcription"/>
    <property type="evidence" value="ECO:0007669"/>
    <property type="project" value="UniProtKB-UniRule"/>
</dbReference>
<dbReference type="FunFam" id="1.10.10.10:FF:000049">
    <property type="entry name" value="Heat-inducible transcription repressor HrcA"/>
    <property type="match status" value="1"/>
</dbReference>
<dbReference type="Gene3D" id="3.30.450.40">
    <property type="match status" value="1"/>
</dbReference>
<dbReference type="Gene3D" id="3.30.390.60">
    <property type="entry name" value="Heat-inducible transcription repressor hrca homolog, domain 3"/>
    <property type="match status" value="1"/>
</dbReference>
<dbReference type="Gene3D" id="1.10.10.10">
    <property type="entry name" value="Winged helix-like DNA-binding domain superfamily/Winged helix DNA-binding domain"/>
    <property type="match status" value="1"/>
</dbReference>
<dbReference type="HAMAP" id="MF_00081">
    <property type="entry name" value="HrcA"/>
    <property type="match status" value="1"/>
</dbReference>
<dbReference type="InterPro" id="IPR029016">
    <property type="entry name" value="GAF-like_dom_sf"/>
</dbReference>
<dbReference type="InterPro" id="IPR002571">
    <property type="entry name" value="HrcA"/>
</dbReference>
<dbReference type="InterPro" id="IPR021153">
    <property type="entry name" value="HrcA_C"/>
</dbReference>
<dbReference type="InterPro" id="IPR036388">
    <property type="entry name" value="WH-like_DNA-bd_sf"/>
</dbReference>
<dbReference type="InterPro" id="IPR036390">
    <property type="entry name" value="WH_DNA-bd_sf"/>
</dbReference>
<dbReference type="InterPro" id="IPR023120">
    <property type="entry name" value="WHTH_transcript_rep_HrcA_IDD"/>
</dbReference>
<dbReference type="NCBIfam" id="TIGR00331">
    <property type="entry name" value="hrcA"/>
    <property type="match status" value="1"/>
</dbReference>
<dbReference type="PANTHER" id="PTHR34824">
    <property type="entry name" value="HEAT-INDUCIBLE TRANSCRIPTION REPRESSOR HRCA"/>
    <property type="match status" value="1"/>
</dbReference>
<dbReference type="PANTHER" id="PTHR34824:SF1">
    <property type="entry name" value="HEAT-INDUCIBLE TRANSCRIPTION REPRESSOR HRCA"/>
    <property type="match status" value="1"/>
</dbReference>
<dbReference type="Pfam" id="PF01628">
    <property type="entry name" value="HrcA"/>
    <property type="match status" value="1"/>
</dbReference>
<dbReference type="PIRSF" id="PIRSF005485">
    <property type="entry name" value="HrcA"/>
    <property type="match status" value="1"/>
</dbReference>
<dbReference type="SUPFAM" id="SSF55781">
    <property type="entry name" value="GAF domain-like"/>
    <property type="match status" value="1"/>
</dbReference>
<dbReference type="SUPFAM" id="SSF46785">
    <property type="entry name" value="Winged helix' DNA-binding domain"/>
    <property type="match status" value="1"/>
</dbReference>
<sequence>MVSERGLDVLRVIVQDYVSSREPVGSKSIVERHAFGVSAATIRNDMALLEEEELIAAPHTSSGRVPTDKGYRLFVDQLADVRPLTPAQRQAIHVFLGESVDLDDVLARTVRLLAQLTNQVALVQYPSLATSHVKHVELVALSTTRVLTVLITDTGRVEQRVVELAGDPDDAFLAVMRTRINQAVGGLGLAEAATRLETLSDEVEPAQRAAASVLAGTLVEQVLANRQERLLLAGSANLARTERDFPGSISPVLEAIEEQVVLLRLLGEMEADQHGVSVSIGRENAPFGLGETSVLTSGYSSSGGVLARLGVLGPTRMDYSTNMASVRAVARYLSRLLEER</sequence>
<comment type="function">
    <text evidence="1">Negative regulator of class I heat shock genes (grpE-dnaK-dnaJ and groELS operons). Prevents heat-shock induction of these operons.</text>
</comment>
<comment type="similarity">
    <text evidence="1">Belongs to the HrcA family.</text>
</comment>
<protein>
    <recommendedName>
        <fullName evidence="1">Heat-inducible transcription repressor HrcA</fullName>
    </recommendedName>
</protein>
<organism>
    <name type="scientific">Clavibacter michiganensis subsp. michiganensis (strain NCPPB 382)</name>
    <dbReference type="NCBI Taxonomy" id="443906"/>
    <lineage>
        <taxon>Bacteria</taxon>
        <taxon>Bacillati</taxon>
        <taxon>Actinomycetota</taxon>
        <taxon>Actinomycetes</taxon>
        <taxon>Micrococcales</taxon>
        <taxon>Microbacteriaceae</taxon>
        <taxon>Clavibacter</taxon>
    </lineage>
</organism>
<gene>
    <name evidence="1" type="primary">hrcA</name>
    <name type="ordered locus">CMM_1564</name>
</gene>
<accession>A5CRA6</accession>